<keyword id="KW-0002">3D-structure</keyword>
<keyword id="KW-0106">Calcium</keyword>
<keyword id="KW-1003">Cell membrane</keyword>
<keyword id="KW-0966">Cell projection</keyword>
<keyword id="KW-0968">Cytoplasmic vesicle</keyword>
<keyword id="KW-0446">Lipid-binding</keyword>
<keyword id="KW-0472">Membrane</keyword>
<keyword id="KW-0479">Metal-binding</keyword>
<keyword id="KW-0488">Methylation</keyword>
<keyword id="KW-0597">Phosphoprotein</keyword>
<keyword id="KW-0628">Postsynaptic cell membrane</keyword>
<keyword id="KW-0653">Protein transport</keyword>
<keyword id="KW-1185">Reference proteome</keyword>
<keyword id="KW-0677">Repeat</keyword>
<keyword id="KW-0770">Synapse</keyword>
<keyword id="KW-0813">Transport</keyword>
<keyword id="KW-0832">Ubl conjugation</keyword>
<keyword id="KW-0862">Zinc</keyword>
<keyword id="KW-0863">Zinc-finger</keyword>
<sequence length="684" mass="75832">MTDTVVNRWMYPGDGPLQSNDKEQLQAGWSVHPGAQTDRQRKQEELTDEEKEIINRVIARAEKMETMEQERIGRLVDRLETMRKNVAGDGVNRCILCGEQLGMLGSACVVCEDCKKNVCTKCGVETSNNRPHPVWLCKICLEQREVWKRSGAWFFKGFPKQVLPQPMPIKKTKPQQPAGEPATQEQPTPESRHPARAPARGDMEDRRAPGQKPGPDLTSAPGRGSHGPPTRRASEARMSTTTRDSEGWDHGHGGGAGDTSRSPGGEQGLRRANSVQASRPAPASMPSPAPPQPVQPGPPGGSRAAPGPGRFPEQSTEAPPSDPGYPGAVAPAREERTGPTGGFQAAPHTAGPYSQAAPARQPPPAEEEEEEANSYDSDQATTLGALEFSLLYDQDNSNLQCTIIRAKGLKPMDSNGLADPYVKLHLLPGASKSNKLRTKTLRNTRNPVWNETLQYHGITEEDMQRKTLRISVCDEDKFGHNEFIGETRFSLKKLKANQRKNFNICLERVIPMKRAGTTGSARGMALYEEEQVERIGDIEERGKILVSLMYSTQQGGLIVGIIRCVHLAAMDANGYSDPFVKLWLKPDMGKKAKHKTQIKKKTLNPEFNEEFFYDIKHSDLAKKSLDISVWDYDIGKSNDYIGGCQLGISAKGERLKHWYECLKNKDKKIERWHQLQNENHVSSD</sequence>
<feature type="chain" id="PRO_0000190229" description="Rabphilin-3A">
    <location>
        <begin position="1"/>
        <end position="684"/>
    </location>
</feature>
<feature type="domain" description="RabBD" evidence="5">
    <location>
        <begin position="40"/>
        <end position="157"/>
    </location>
</feature>
<feature type="domain" description="C2 1" evidence="3">
    <location>
        <begin position="382"/>
        <end position="504"/>
    </location>
</feature>
<feature type="domain" description="C2 2" evidence="3">
    <location>
        <begin position="540"/>
        <end position="673"/>
    </location>
</feature>
<feature type="zinc finger region" description="FYVE-type" evidence="4">
    <location>
        <begin position="88"/>
        <end position="145"/>
    </location>
</feature>
<feature type="region of interest" description="Disordered" evidence="6">
    <location>
        <begin position="1"/>
        <end position="21"/>
    </location>
</feature>
<feature type="region of interest" description="Disordered" evidence="6">
    <location>
        <begin position="162"/>
        <end position="377"/>
    </location>
</feature>
<feature type="compositionally biased region" description="Basic and acidic residues" evidence="6">
    <location>
        <begin position="199"/>
        <end position="208"/>
    </location>
</feature>
<feature type="compositionally biased region" description="Basic and acidic residues" evidence="6">
    <location>
        <begin position="243"/>
        <end position="252"/>
    </location>
</feature>
<feature type="compositionally biased region" description="Pro residues" evidence="6">
    <location>
        <begin position="283"/>
        <end position="299"/>
    </location>
</feature>
<feature type="compositionally biased region" description="Low complexity" evidence="6">
    <location>
        <begin position="301"/>
        <end position="310"/>
    </location>
</feature>
<feature type="binding site" evidence="4">
    <location>
        <position position="94"/>
    </location>
    <ligand>
        <name>Zn(2+)</name>
        <dbReference type="ChEBI" id="CHEBI:29105"/>
        <label>1</label>
    </ligand>
</feature>
<feature type="binding site" evidence="4">
    <location>
        <position position="97"/>
    </location>
    <ligand>
        <name>Zn(2+)</name>
        <dbReference type="ChEBI" id="CHEBI:29105"/>
        <label>1</label>
    </ligand>
</feature>
<feature type="binding site" evidence="4">
    <location>
        <position position="111"/>
    </location>
    <ligand>
        <name>Zn(2+)</name>
        <dbReference type="ChEBI" id="CHEBI:29105"/>
        <label>2</label>
    </ligand>
</feature>
<feature type="binding site" evidence="4">
    <location>
        <position position="114"/>
    </location>
    <ligand>
        <name>Zn(2+)</name>
        <dbReference type="ChEBI" id="CHEBI:29105"/>
        <label>2</label>
    </ligand>
</feature>
<feature type="binding site" evidence="4">
    <location>
        <position position="119"/>
    </location>
    <ligand>
        <name>Zn(2+)</name>
        <dbReference type="ChEBI" id="CHEBI:29105"/>
        <label>1</label>
    </ligand>
</feature>
<feature type="binding site" evidence="4">
    <location>
        <position position="122"/>
    </location>
    <ligand>
        <name>Zn(2+)</name>
        <dbReference type="ChEBI" id="CHEBI:29105"/>
        <label>1</label>
    </ligand>
</feature>
<feature type="binding site" evidence="4">
    <location>
        <position position="137"/>
    </location>
    <ligand>
        <name>Zn(2+)</name>
        <dbReference type="ChEBI" id="CHEBI:29105"/>
        <label>2</label>
    </ligand>
</feature>
<feature type="binding site" evidence="4">
    <location>
        <position position="140"/>
    </location>
    <ligand>
        <name>Zn(2+)</name>
        <dbReference type="ChEBI" id="CHEBI:29105"/>
        <label>2</label>
    </ligand>
</feature>
<feature type="binding site" evidence="1">
    <location>
        <position position="412"/>
    </location>
    <ligand>
        <name>Ca(2+)</name>
        <dbReference type="ChEBI" id="CHEBI:29108"/>
        <label>1</label>
    </ligand>
</feature>
<feature type="binding site" evidence="10 18">
    <location>
        <position position="413"/>
    </location>
    <ligand>
        <name>Ca(2+)</name>
        <dbReference type="ChEBI" id="CHEBI:29108"/>
        <label>1</label>
    </ligand>
</feature>
<feature type="binding site" evidence="1">
    <location>
        <position position="413"/>
    </location>
    <ligand>
        <name>Ca(2+)</name>
        <dbReference type="ChEBI" id="CHEBI:29108"/>
        <label>2</label>
    </ligand>
</feature>
<feature type="binding site" evidence="1">
    <location>
        <position position="419"/>
    </location>
    <ligand>
        <name>Ca(2+)</name>
        <dbReference type="ChEBI" id="CHEBI:29108"/>
        <label>2</label>
    </ligand>
</feature>
<feature type="binding site" evidence="1">
    <location>
        <position position="474"/>
    </location>
    <ligand>
        <name>Ca(2+)</name>
        <dbReference type="ChEBI" id="CHEBI:29108"/>
        <label>1</label>
    </ligand>
</feature>
<feature type="binding site" evidence="1">
    <location>
        <position position="474"/>
    </location>
    <ligand>
        <name>Ca(2+)</name>
        <dbReference type="ChEBI" id="CHEBI:29108"/>
        <label>2</label>
    </ligand>
</feature>
<feature type="binding site" evidence="1">
    <location>
        <position position="475"/>
    </location>
    <ligand>
        <name>Ca(2+)</name>
        <dbReference type="ChEBI" id="CHEBI:29108"/>
        <label>2</label>
    </ligand>
</feature>
<feature type="binding site" evidence="10 18">
    <location>
        <position position="476"/>
    </location>
    <ligand>
        <name>Ca(2+)</name>
        <dbReference type="ChEBI" id="CHEBI:29108"/>
        <label>1</label>
    </ligand>
</feature>
<feature type="binding site" evidence="1">
    <location>
        <position position="476"/>
    </location>
    <ligand>
        <name>Ca(2+)</name>
        <dbReference type="ChEBI" id="CHEBI:29108"/>
        <label>2</label>
    </ligand>
</feature>
<feature type="binding site" evidence="1">
    <location>
        <position position="482"/>
    </location>
    <ligand>
        <name>Ca(2+)</name>
        <dbReference type="ChEBI" id="CHEBI:29108"/>
        <label>1</label>
    </ligand>
</feature>
<feature type="binding site" evidence="9 16">
    <location>
        <position position="529"/>
    </location>
    <ligand>
        <name>Ca(2+)</name>
        <dbReference type="ChEBI" id="CHEBI:29108"/>
        <label>3</label>
    </ligand>
</feature>
<feature type="binding site" evidence="9 16 17">
    <location>
        <position position="571"/>
    </location>
    <ligand>
        <name>Ca(2+)</name>
        <dbReference type="ChEBI" id="CHEBI:29108"/>
        <label>3</label>
    </ligand>
</feature>
<feature type="binding site" evidence="9 16 17">
    <location>
        <position position="571"/>
    </location>
    <ligand>
        <name>Ca(2+)</name>
        <dbReference type="ChEBI" id="CHEBI:29108"/>
        <label>4</label>
    </ligand>
</feature>
<feature type="binding site" evidence="9 16 17">
    <location>
        <position position="577"/>
    </location>
    <ligand>
        <name>Ca(2+)</name>
        <dbReference type="ChEBI" id="CHEBI:29108"/>
        <label>3</label>
    </ligand>
</feature>
<feature type="binding site" evidence="9 16 17">
    <location>
        <position position="631"/>
    </location>
    <ligand>
        <name>Ca(2+)</name>
        <dbReference type="ChEBI" id="CHEBI:29108"/>
        <label>3</label>
    </ligand>
</feature>
<feature type="binding site" evidence="9 16">
    <location>
        <position position="631"/>
    </location>
    <ligand>
        <name>Ca(2+)</name>
        <dbReference type="ChEBI" id="CHEBI:29108"/>
        <label>4</label>
    </ligand>
</feature>
<feature type="binding site" evidence="9 16 17">
    <location>
        <position position="632"/>
    </location>
    <ligand>
        <name>Ca(2+)</name>
        <dbReference type="ChEBI" id="CHEBI:29108"/>
        <label>3</label>
    </ligand>
</feature>
<feature type="binding site" evidence="9 16 17">
    <location>
        <position position="633"/>
    </location>
    <ligand>
        <name>Ca(2+)</name>
        <dbReference type="ChEBI" id="CHEBI:29108"/>
        <label>3</label>
    </ligand>
</feature>
<feature type="binding site" evidence="9 16">
    <location>
        <position position="633"/>
    </location>
    <ligand>
        <name>Ca(2+)</name>
        <dbReference type="ChEBI" id="CHEBI:29108"/>
        <label>4</label>
    </ligand>
</feature>
<feature type="binding site" evidence="9 16 17">
    <location>
        <position position="639"/>
    </location>
    <ligand>
        <name>Ca(2+)</name>
        <dbReference type="ChEBI" id="CHEBI:29108"/>
        <label>4</label>
    </ligand>
</feature>
<feature type="modified residue" description="Omega-N-methylarginine" evidence="1">
    <location>
        <position position="223"/>
    </location>
</feature>
<feature type="modified residue" description="Phosphoserine" evidence="1">
    <location>
        <position position="274"/>
    </location>
</feature>
<feature type="modified residue" description="Phosphoserine" evidence="19">
    <location>
        <position position="682"/>
    </location>
</feature>
<feature type="modified residue" description="Phosphoserine" evidence="19">
    <location>
        <position position="683"/>
    </location>
</feature>
<feature type="helix" evidence="20">
    <location>
        <begin position="50"/>
        <end position="84"/>
    </location>
</feature>
<feature type="strand" evidence="20">
    <location>
        <begin position="90"/>
        <end position="93"/>
    </location>
</feature>
<feature type="strand" evidence="20">
    <location>
        <begin position="95"/>
        <end position="97"/>
    </location>
</feature>
<feature type="strand" evidence="20">
    <location>
        <begin position="108"/>
        <end position="110"/>
    </location>
</feature>
<feature type="turn" evidence="20">
    <location>
        <begin position="112"/>
        <end position="114"/>
    </location>
</feature>
<feature type="strand" evidence="20">
    <location>
        <begin position="117"/>
        <end position="119"/>
    </location>
</feature>
<feature type="strand" evidence="20">
    <location>
        <begin position="122"/>
        <end position="125"/>
    </location>
</feature>
<feature type="strand" evidence="20">
    <location>
        <begin position="129"/>
        <end position="132"/>
    </location>
</feature>
<feature type="strand" evidence="20">
    <location>
        <begin position="135"/>
        <end position="137"/>
    </location>
</feature>
<feature type="helix" evidence="20">
    <location>
        <begin position="138"/>
        <end position="149"/>
    </location>
</feature>
<feature type="helix" evidence="20">
    <location>
        <begin position="152"/>
        <end position="155"/>
    </location>
</feature>
<feature type="strand" evidence="25">
    <location>
        <begin position="385"/>
        <end position="393"/>
    </location>
</feature>
<feature type="helix" evidence="25">
    <location>
        <begin position="394"/>
        <end position="396"/>
    </location>
</feature>
<feature type="strand" evidence="25">
    <location>
        <begin position="398"/>
        <end position="408"/>
    </location>
</feature>
<feature type="strand" evidence="24">
    <location>
        <begin position="414"/>
        <end position="416"/>
    </location>
</feature>
<feature type="strand" evidence="25">
    <location>
        <begin position="420"/>
        <end position="428"/>
    </location>
</feature>
<feature type="helix" evidence="25">
    <location>
        <begin position="432"/>
        <end position="434"/>
    </location>
</feature>
<feature type="strand" evidence="25">
    <location>
        <begin position="435"/>
        <end position="437"/>
    </location>
</feature>
<feature type="strand" evidence="25">
    <location>
        <begin position="448"/>
        <end position="457"/>
    </location>
</feature>
<feature type="helix" evidence="25">
    <location>
        <begin position="460"/>
        <end position="465"/>
    </location>
</feature>
<feature type="strand" evidence="25">
    <location>
        <begin position="467"/>
        <end position="475"/>
    </location>
</feature>
<feature type="strand" evidence="24">
    <location>
        <begin position="477"/>
        <end position="479"/>
    </location>
</feature>
<feature type="strand" evidence="25">
    <location>
        <begin position="481"/>
        <end position="490"/>
    </location>
</feature>
<feature type="helix" evidence="25">
    <location>
        <begin position="491"/>
        <end position="493"/>
    </location>
</feature>
<feature type="strand" evidence="25">
    <location>
        <begin position="500"/>
        <end position="505"/>
    </location>
</feature>
<feature type="helix" evidence="22">
    <location>
        <begin position="527"/>
        <end position="530"/>
    </location>
</feature>
<feature type="strand" evidence="21">
    <location>
        <begin position="543"/>
        <end position="551"/>
    </location>
</feature>
<feature type="turn" evidence="21">
    <location>
        <begin position="552"/>
        <end position="555"/>
    </location>
</feature>
<feature type="strand" evidence="21">
    <location>
        <begin position="556"/>
        <end position="566"/>
    </location>
</feature>
<feature type="strand" evidence="28">
    <location>
        <begin position="571"/>
        <end position="574"/>
    </location>
</feature>
<feature type="strand" evidence="21">
    <location>
        <begin position="578"/>
        <end position="585"/>
    </location>
</feature>
<feature type="strand" evidence="27">
    <location>
        <begin position="587"/>
        <end position="590"/>
    </location>
</feature>
<feature type="strand" evidence="21">
    <location>
        <begin position="593"/>
        <end position="595"/>
    </location>
</feature>
<feature type="strand" evidence="21">
    <location>
        <begin position="606"/>
        <end position="614"/>
    </location>
</feature>
<feature type="helix" evidence="21">
    <location>
        <begin position="617"/>
        <end position="622"/>
    </location>
</feature>
<feature type="strand" evidence="21">
    <location>
        <begin position="624"/>
        <end position="631"/>
    </location>
</feature>
<feature type="strand" evidence="21">
    <location>
        <begin position="634"/>
        <end position="636"/>
    </location>
</feature>
<feature type="strand" evidence="21">
    <location>
        <begin position="639"/>
        <end position="647"/>
    </location>
</feature>
<feature type="strand" evidence="26">
    <location>
        <begin position="648"/>
        <end position="650"/>
    </location>
</feature>
<feature type="helix" evidence="21">
    <location>
        <begin position="652"/>
        <end position="663"/>
    </location>
</feature>
<feature type="strand" evidence="23">
    <location>
        <begin position="664"/>
        <end position="667"/>
    </location>
</feature>
<feature type="strand" evidence="21">
    <location>
        <begin position="669"/>
        <end position="674"/>
    </location>
</feature>
<evidence type="ECO:0000250" key="1">
    <source>
        <dbReference type="UniProtKB" id="P47708"/>
    </source>
</evidence>
<evidence type="ECO:0000250" key="2">
    <source>
        <dbReference type="UniProtKB" id="Q9Y2J0"/>
    </source>
</evidence>
<evidence type="ECO:0000255" key="3">
    <source>
        <dbReference type="PROSITE-ProRule" id="PRU00041"/>
    </source>
</evidence>
<evidence type="ECO:0000255" key="4">
    <source>
        <dbReference type="PROSITE-ProRule" id="PRU00091"/>
    </source>
</evidence>
<evidence type="ECO:0000255" key="5">
    <source>
        <dbReference type="PROSITE-ProRule" id="PRU00234"/>
    </source>
</evidence>
<evidence type="ECO:0000256" key="6">
    <source>
        <dbReference type="SAM" id="MobiDB-lite"/>
    </source>
</evidence>
<evidence type="ECO:0000269" key="7">
    <source>
    </source>
</evidence>
<evidence type="ECO:0000269" key="8">
    <source>
    </source>
</evidence>
<evidence type="ECO:0000269" key="9">
    <source>
    </source>
</evidence>
<evidence type="ECO:0000269" key="10">
    <source>
    </source>
</evidence>
<evidence type="ECO:0000269" key="11">
    <source>
    </source>
</evidence>
<evidence type="ECO:0000269" key="12">
    <source>
    </source>
</evidence>
<evidence type="ECO:0000269" key="13">
    <source>
    </source>
</evidence>
<evidence type="ECO:0000269" key="14">
    <source>
    </source>
</evidence>
<evidence type="ECO:0000269" key="15">
    <source>
    </source>
</evidence>
<evidence type="ECO:0007744" key="16">
    <source>
        <dbReference type="PDB" id="2CM5"/>
    </source>
</evidence>
<evidence type="ECO:0007744" key="17">
    <source>
        <dbReference type="PDB" id="2CM6"/>
    </source>
</evidence>
<evidence type="ECO:0007744" key="18">
    <source>
        <dbReference type="PDB" id="4LT7"/>
    </source>
</evidence>
<evidence type="ECO:0007744" key="19">
    <source>
    </source>
</evidence>
<evidence type="ECO:0007829" key="20">
    <source>
        <dbReference type="PDB" id="1ZBD"/>
    </source>
</evidence>
<evidence type="ECO:0007829" key="21">
    <source>
        <dbReference type="PDB" id="2CM5"/>
    </source>
</evidence>
<evidence type="ECO:0007829" key="22">
    <source>
        <dbReference type="PDB" id="2CM6"/>
    </source>
</evidence>
<evidence type="ECO:0007829" key="23">
    <source>
        <dbReference type="PDB" id="3RPB"/>
    </source>
</evidence>
<evidence type="ECO:0007829" key="24">
    <source>
        <dbReference type="PDB" id="4LT7"/>
    </source>
</evidence>
<evidence type="ECO:0007829" key="25">
    <source>
        <dbReference type="PDB" id="4NS0"/>
    </source>
</evidence>
<evidence type="ECO:0007829" key="26">
    <source>
        <dbReference type="PDB" id="5LO8"/>
    </source>
</evidence>
<evidence type="ECO:0007829" key="27">
    <source>
        <dbReference type="PDB" id="5LOB"/>
    </source>
</evidence>
<evidence type="ECO:0007829" key="28">
    <source>
        <dbReference type="PDB" id="5LOW"/>
    </source>
</evidence>
<protein>
    <recommendedName>
        <fullName>Rabphilin-3A</fullName>
    </recommendedName>
    <alternativeName>
        <fullName>Exophilin-1</fullName>
    </alternativeName>
</protein>
<accession>P47709</accession>
<gene>
    <name type="primary">Rph3a</name>
</gene>
<dbReference type="EMBL" id="U12571">
    <property type="protein sequence ID" value="AAA62662.1"/>
    <property type="molecule type" value="mRNA"/>
</dbReference>
<dbReference type="PIR" id="I58166">
    <property type="entry name" value="I58166"/>
</dbReference>
<dbReference type="RefSeq" id="NP_598202.1">
    <property type="nucleotide sequence ID" value="NM_133518.1"/>
</dbReference>
<dbReference type="PDB" id="1ZBD">
    <property type="method" value="X-ray"/>
    <property type="resolution" value="2.60 A"/>
    <property type="chains" value="B=41-170"/>
</dbReference>
<dbReference type="PDB" id="2CHD">
    <property type="method" value="X-ray"/>
    <property type="resolution" value="1.92 A"/>
    <property type="chains" value="A=371-510"/>
</dbReference>
<dbReference type="PDB" id="2CM5">
    <property type="method" value="X-ray"/>
    <property type="resolution" value="1.28 A"/>
    <property type="chains" value="A=519-684"/>
</dbReference>
<dbReference type="PDB" id="2CM6">
    <property type="method" value="X-ray"/>
    <property type="resolution" value="1.85 A"/>
    <property type="chains" value="A/B=519-684"/>
</dbReference>
<dbReference type="PDB" id="3RPB">
    <property type="method" value="NMR"/>
    <property type="chains" value="A=541-680"/>
</dbReference>
<dbReference type="PDB" id="4LT7">
    <property type="method" value="X-ray"/>
    <property type="resolution" value="2.50 A"/>
    <property type="chains" value="A=378-510"/>
</dbReference>
<dbReference type="PDB" id="4NP9">
    <property type="method" value="X-ray"/>
    <property type="resolution" value="1.92 A"/>
    <property type="chains" value="A=378-510"/>
</dbReference>
<dbReference type="PDB" id="4NS0">
    <property type="method" value="X-ray"/>
    <property type="resolution" value="1.80 A"/>
    <property type="chains" value="A=378-510"/>
</dbReference>
<dbReference type="PDB" id="5LO8">
    <property type="method" value="X-ray"/>
    <property type="resolution" value="2.50 A"/>
    <property type="chains" value="A/B=536-680"/>
</dbReference>
<dbReference type="PDB" id="5LOB">
    <property type="method" value="X-ray"/>
    <property type="resolution" value="3.30 A"/>
    <property type="chains" value="A/B/C=536-680"/>
</dbReference>
<dbReference type="PDB" id="5LOW">
    <property type="method" value="X-ray"/>
    <property type="resolution" value="2.80 A"/>
    <property type="chains" value="A/B/C/H/I/J=536-680"/>
</dbReference>
<dbReference type="PDBsum" id="1ZBD"/>
<dbReference type="PDBsum" id="2CHD"/>
<dbReference type="PDBsum" id="2CM5"/>
<dbReference type="PDBsum" id="2CM6"/>
<dbReference type="PDBsum" id="3RPB"/>
<dbReference type="PDBsum" id="4LT7"/>
<dbReference type="PDBsum" id="4NP9"/>
<dbReference type="PDBsum" id="4NS0"/>
<dbReference type="PDBsum" id="5LO8"/>
<dbReference type="PDBsum" id="5LOB"/>
<dbReference type="PDBsum" id="5LOW"/>
<dbReference type="SMR" id="P47709"/>
<dbReference type="BioGRID" id="251056">
    <property type="interactions" value="5"/>
</dbReference>
<dbReference type="FunCoup" id="P47709">
    <property type="interactions" value="1091"/>
</dbReference>
<dbReference type="IntAct" id="P47709">
    <property type="interactions" value="6"/>
</dbReference>
<dbReference type="MINT" id="P47709"/>
<dbReference type="STRING" id="10116.ENSRNOP00000001844"/>
<dbReference type="GlyGen" id="P47709">
    <property type="glycosylation" value="2 sites, 1 O-linked glycan (1 site)"/>
</dbReference>
<dbReference type="iPTMnet" id="P47709"/>
<dbReference type="PhosphoSitePlus" id="P47709"/>
<dbReference type="PaxDb" id="10116-ENSRNOP00000001844"/>
<dbReference type="GeneID" id="171039"/>
<dbReference type="KEGG" id="rno:171039"/>
<dbReference type="UCSC" id="RGD:620073">
    <property type="organism name" value="rat"/>
</dbReference>
<dbReference type="AGR" id="RGD:620073"/>
<dbReference type="CTD" id="22895"/>
<dbReference type="RGD" id="620073">
    <property type="gene designation" value="Rph3a"/>
</dbReference>
<dbReference type="eggNOG" id="KOG1013">
    <property type="taxonomic scope" value="Eukaryota"/>
</dbReference>
<dbReference type="InParanoid" id="P47709"/>
<dbReference type="OrthoDB" id="270970at2759"/>
<dbReference type="PhylomeDB" id="P47709"/>
<dbReference type="EvolutionaryTrace" id="P47709"/>
<dbReference type="PRO" id="PR:P47709"/>
<dbReference type="Proteomes" id="UP000002494">
    <property type="component" value="Unplaced"/>
</dbReference>
<dbReference type="GO" id="GO:0098981">
    <property type="term" value="C:cholinergic synapse"/>
    <property type="evidence" value="ECO:0000314"/>
    <property type="project" value="SynGO"/>
</dbReference>
<dbReference type="GO" id="GO:0043197">
    <property type="term" value="C:dendritic spine"/>
    <property type="evidence" value="ECO:0000314"/>
    <property type="project" value="UniProtKB"/>
</dbReference>
<dbReference type="GO" id="GO:0019898">
    <property type="term" value="C:extrinsic component of membrane"/>
    <property type="evidence" value="ECO:0000314"/>
    <property type="project" value="RGD"/>
</dbReference>
<dbReference type="GO" id="GO:0098850">
    <property type="term" value="C:extrinsic component of synaptic vesicle membrane"/>
    <property type="evidence" value="ECO:0000314"/>
    <property type="project" value="SynGO"/>
</dbReference>
<dbReference type="GO" id="GO:0031594">
    <property type="term" value="C:neuromuscular junction"/>
    <property type="evidence" value="ECO:0000314"/>
    <property type="project" value="SynGO"/>
</dbReference>
<dbReference type="GO" id="GO:0043005">
    <property type="term" value="C:neuron projection"/>
    <property type="evidence" value="ECO:0000318"/>
    <property type="project" value="GO_Central"/>
</dbReference>
<dbReference type="GO" id="GO:0045211">
    <property type="term" value="C:postsynaptic membrane"/>
    <property type="evidence" value="ECO:0000314"/>
    <property type="project" value="UniProtKB"/>
</dbReference>
<dbReference type="GO" id="GO:0032991">
    <property type="term" value="C:protein-containing complex"/>
    <property type="evidence" value="ECO:0000314"/>
    <property type="project" value="RGD"/>
</dbReference>
<dbReference type="GO" id="GO:0030141">
    <property type="term" value="C:secretory granule"/>
    <property type="evidence" value="ECO:0000314"/>
    <property type="project" value="RGD"/>
</dbReference>
<dbReference type="GO" id="GO:0045202">
    <property type="term" value="C:synapse"/>
    <property type="evidence" value="ECO:0000318"/>
    <property type="project" value="GO_Central"/>
</dbReference>
<dbReference type="GO" id="GO:0008021">
    <property type="term" value="C:synaptic vesicle"/>
    <property type="evidence" value="ECO:0000314"/>
    <property type="project" value="UniProtKB"/>
</dbReference>
<dbReference type="GO" id="GO:0030672">
    <property type="term" value="C:synaptic vesicle membrane"/>
    <property type="evidence" value="ECO:0000314"/>
    <property type="project" value="RGD"/>
</dbReference>
<dbReference type="GO" id="GO:0005509">
    <property type="term" value="F:calcium ion binding"/>
    <property type="evidence" value="ECO:0000314"/>
    <property type="project" value="UniProtKB"/>
</dbReference>
<dbReference type="GO" id="GO:0005544">
    <property type="term" value="F:calcium-dependent phospholipid binding"/>
    <property type="evidence" value="ECO:0000314"/>
    <property type="project" value="UniProtKB"/>
</dbReference>
<dbReference type="GO" id="GO:0070679">
    <property type="term" value="F:inositol 1,4,5 trisphosphate binding"/>
    <property type="evidence" value="ECO:0000314"/>
    <property type="project" value="RGD"/>
</dbReference>
<dbReference type="GO" id="GO:0042301">
    <property type="term" value="F:phosphate ion binding"/>
    <property type="evidence" value="ECO:0000314"/>
    <property type="project" value="RGD"/>
</dbReference>
<dbReference type="GO" id="GO:0005546">
    <property type="term" value="F:phosphatidylinositol-4,5-bisphosphate binding"/>
    <property type="evidence" value="ECO:0000314"/>
    <property type="project" value="RGD"/>
</dbReference>
<dbReference type="GO" id="GO:0005543">
    <property type="term" value="F:phospholipid binding"/>
    <property type="evidence" value="ECO:0000304"/>
    <property type="project" value="RGD"/>
</dbReference>
<dbReference type="GO" id="GO:0044877">
    <property type="term" value="F:protein-containing complex binding"/>
    <property type="evidence" value="ECO:0000314"/>
    <property type="project" value="RGD"/>
</dbReference>
<dbReference type="GO" id="GO:0008430">
    <property type="term" value="F:selenium binding"/>
    <property type="evidence" value="ECO:0000314"/>
    <property type="project" value="RGD"/>
</dbReference>
<dbReference type="GO" id="GO:0031267">
    <property type="term" value="F:small GTPase binding"/>
    <property type="evidence" value="ECO:0007669"/>
    <property type="project" value="InterPro"/>
</dbReference>
<dbReference type="GO" id="GO:0008270">
    <property type="term" value="F:zinc ion binding"/>
    <property type="evidence" value="ECO:0000314"/>
    <property type="project" value="RGD"/>
</dbReference>
<dbReference type="GO" id="GO:0099502">
    <property type="term" value="P:calcium-dependent activation of synaptic vesicle fusion"/>
    <property type="evidence" value="ECO:0000318"/>
    <property type="project" value="GO_Central"/>
</dbReference>
<dbReference type="GO" id="GO:0097061">
    <property type="term" value="P:dendritic spine organization"/>
    <property type="evidence" value="ECO:0000315"/>
    <property type="project" value="UniProtKB"/>
</dbReference>
<dbReference type="GO" id="GO:0006886">
    <property type="term" value="P:intracellular protein transport"/>
    <property type="evidence" value="ECO:0007669"/>
    <property type="project" value="InterPro"/>
</dbReference>
<dbReference type="GO" id="GO:0045956">
    <property type="term" value="P:positive regulation of calcium ion-dependent exocytosis"/>
    <property type="evidence" value="ECO:0000318"/>
    <property type="project" value="GO_Central"/>
</dbReference>
<dbReference type="GO" id="GO:2000310">
    <property type="term" value="P:regulation of NMDA receptor activity"/>
    <property type="evidence" value="ECO:0000315"/>
    <property type="project" value="UniProtKB"/>
</dbReference>
<dbReference type="GO" id="GO:0061669">
    <property type="term" value="P:spontaneous neurotransmitter secretion"/>
    <property type="evidence" value="ECO:0000266"/>
    <property type="project" value="RGD"/>
</dbReference>
<dbReference type="GO" id="GO:0016082">
    <property type="term" value="P:synaptic vesicle priming"/>
    <property type="evidence" value="ECO:0000266"/>
    <property type="project" value="RGD"/>
</dbReference>
<dbReference type="CDD" id="cd04035">
    <property type="entry name" value="C2A_Rabphilin_Doc2"/>
    <property type="match status" value="1"/>
</dbReference>
<dbReference type="CDD" id="cd08384">
    <property type="entry name" value="C2B_Rabphilin_Doc2"/>
    <property type="match status" value="1"/>
</dbReference>
<dbReference type="CDD" id="cd15762">
    <property type="entry name" value="FYVE_RP3A"/>
    <property type="match status" value="1"/>
</dbReference>
<dbReference type="FunFam" id="2.60.40.150:FF:000032">
    <property type="entry name" value="Double c2-like domain-containing"/>
    <property type="match status" value="1"/>
</dbReference>
<dbReference type="FunFam" id="2.60.40.150:FF:000023">
    <property type="entry name" value="Double C2-like domain-containing protein"/>
    <property type="match status" value="1"/>
</dbReference>
<dbReference type="FunFam" id="3.30.40.10:FF:000182">
    <property type="entry name" value="rabphilin-3A isoform X1"/>
    <property type="match status" value="1"/>
</dbReference>
<dbReference type="Gene3D" id="2.60.40.150">
    <property type="entry name" value="C2 domain"/>
    <property type="match status" value="2"/>
</dbReference>
<dbReference type="Gene3D" id="3.30.40.10">
    <property type="entry name" value="Zinc/RING finger domain, C3HC4 (zinc finger)"/>
    <property type="match status" value="1"/>
</dbReference>
<dbReference type="InterPro" id="IPR000008">
    <property type="entry name" value="C2_dom"/>
</dbReference>
<dbReference type="InterPro" id="IPR035892">
    <property type="entry name" value="C2_domain_sf"/>
</dbReference>
<dbReference type="InterPro" id="IPR041282">
    <property type="entry name" value="FYVE_2"/>
</dbReference>
<dbReference type="InterPro" id="IPR028698">
    <property type="entry name" value="FYVE_RPH3A"/>
</dbReference>
<dbReference type="InterPro" id="IPR010911">
    <property type="entry name" value="Rab_BD"/>
</dbReference>
<dbReference type="InterPro" id="IPR043566">
    <property type="entry name" value="Rabphilin/DOC2/Noc2"/>
</dbReference>
<dbReference type="InterPro" id="IPR047022">
    <property type="entry name" value="Rabphilin_Doc2_C2A"/>
</dbReference>
<dbReference type="InterPro" id="IPR001565">
    <property type="entry name" value="Synaptotagmin"/>
</dbReference>
<dbReference type="InterPro" id="IPR017455">
    <property type="entry name" value="Znf_FYVE-rel"/>
</dbReference>
<dbReference type="InterPro" id="IPR011011">
    <property type="entry name" value="Znf_FYVE_PHD"/>
</dbReference>
<dbReference type="InterPro" id="IPR013083">
    <property type="entry name" value="Znf_RING/FYVE/PHD"/>
</dbReference>
<dbReference type="PANTHER" id="PTHR45729">
    <property type="entry name" value="RABPHILIN, ISOFORM A"/>
    <property type="match status" value="1"/>
</dbReference>
<dbReference type="PANTHER" id="PTHR45729:SF3">
    <property type="entry name" value="RABPHILIN-3A"/>
    <property type="match status" value="1"/>
</dbReference>
<dbReference type="Pfam" id="PF00168">
    <property type="entry name" value="C2"/>
    <property type="match status" value="2"/>
</dbReference>
<dbReference type="Pfam" id="PF02318">
    <property type="entry name" value="FYVE_2"/>
    <property type="match status" value="1"/>
</dbReference>
<dbReference type="PRINTS" id="PR00360">
    <property type="entry name" value="C2DOMAIN"/>
</dbReference>
<dbReference type="PRINTS" id="PR00399">
    <property type="entry name" value="SYNAPTOTAGMN"/>
</dbReference>
<dbReference type="SMART" id="SM00239">
    <property type="entry name" value="C2"/>
    <property type="match status" value="2"/>
</dbReference>
<dbReference type="SUPFAM" id="SSF49562">
    <property type="entry name" value="C2 domain (Calcium/lipid-binding domain, CaLB)"/>
    <property type="match status" value="2"/>
</dbReference>
<dbReference type="SUPFAM" id="SSF57903">
    <property type="entry name" value="FYVE/PHD zinc finger"/>
    <property type="match status" value="1"/>
</dbReference>
<dbReference type="PROSITE" id="PS50004">
    <property type="entry name" value="C2"/>
    <property type="match status" value="2"/>
</dbReference>
<dbReference type="PROSITE" id="PS50916">
    <property type="entry name" value="RABBD"/>
    <property type="match status" value="1"/>
</dbReference>
<dbReference type="PROSITE" id="PS50178">
    <property type="entry name" value="ZF_FYVE"/>
    <property type="match status" value="1"/>
</dbReference>
<organism>
    <name type="scientific">Rattus norvegicus</name>
    <name type="common">Rat</name>
    <dbReference type="NCBI Taxonomy" id="10116"/>
    <lineage>
        <taxon>Eukaryota</taxon>
        <taxon>Metazoa</taxon>
        <taxon>Chordata</taxon>
        <taxon>Craniata</taxon>
        <taxon>Vertebrata</taxon>
        <taxon>Euteleostomi</taxon>
        <taxon>Mammalia</taxon>
        <taxon>Eutheria</taxon>
        <taxon>Euarchontoglires</taxon>
        <taxon>Glires</taxon>
        <taxon>Rodentia</taxon>
        <taxon>Myomorpha</taxon>
        <taxon>Muroidea</taxon>
        <taxon>Muridae</taxon>
        <taxon>Murinae</taxon>
        <taxon>Rattus</taxon>
    </lineage>
</organism>
<name>RP3A_RAT</name>
<comment type="function">
    <text evidence="8 11 13 15">Plays an essential role in docking and fusion steps of regulated exocytosis (PubMed:16203731, PubMed:8617225). At the presynaptic level, RPH3A is recruited by RAB3A to the synaptic vesicle membrane in a GTP-dependent manner where it modulates synaptic vesicle trafficking and calcium-triggered neurotransmitter release (PubMed:8617225). In the post-synaptic compartment, forms a ternary complex with GRIN2A and DLG4 and regulates NMDA receptor stability (PubMed:26679993). Also plays a role in the exocytosis of arginine vasopressin hormone (PubMed:29367474).</text>
</comment>
<comment type="cofactor">
    <cofactor evidence="3">
        <name>Ca(2+)</name>
        <dbReference type="ChEBI" id="CHEBI:29108"/>
    </cofactor>
</comment>
<comment type="subunit">
    <text evidence="1 2 7 8 11 12 13 15">Interacts with RAB3B, RAB3C, RAB3D, RAB8A, RAB27A and RAB27B (By similarity). Interacts with RAB3A; this interaction recruits RPH3A to synaptic vesicules (PubMed:10025402, PubMed:8617225). Interacts (via C2B domain) with SNAP25 (PubMed:16203731, PubMed:28634303). Interacts with deubiquitinating enzyme CAND1; this interaction results in the deubiquitination of RPH3A (PubMed:29367474). Interacts with GRIN2A and DLG4; this ternary complex regulates NMDA receptor composition at postsynaptic membranes (PubMed:26679993). Interacts with SNCA (By similarity).</text>
</comment>
<comment type="interaction">
    <interactant intactId="EBI-1027524">
        <id>P47709</id>
    </interactant>
    <interactant intactId="EBI-440126">
        <id>P63012</id>
        <label>Rab3a</label>
    </interactant>
    <organismsDiffer>false</organismsDiffer>
    <experiments>2</experiments>
</comment>
<comment type="interaction">
    <interactant intactId="EBI-1027524">
        <id>P47709</id>
    </interactant>
    <interactant intactId="EBI-1027214">
        <id>P60881</id>
        <label>Snap25</label>
    </interactant>
    <organismsDiffer>false</organismsDiffer>
    <experiments>4</experiments>
</comment>
<comment type="subcellular location">
    <subcellularLocation>
        <location evidence="14 15">Cytoplasmic vesicle</location>
        <location evidence="14 15">Secretory vesicle</location>
        <location evidence="14 15">Synaptic vesicle membrane</location>
    </subcellularLocation>
    <subcellularLocation>
        <location evidence="11">Cell projection</location>
        <location evidence="11">Dendritic spine</location>
    </subcellularLocation>
    <subcellularLocation>
        <location evidence="11">Postsynaptic cell membrane</location>
    </subcellularLocation>
    <subcellularLocation>
        <location evidence="9">Membrane</location>
        <topology evidence="9">Peripheral membrane protein</topology>
    </subcellularLocation>
</comment>
<comment type="tissue specificity">
    <text>Specifically expressed in brain.</text>
</comment>
<comment type="domain">
    <text evidence="9">Binds calcium via the C2 domains. The calcium-bound C2 domains mediate interactions with phospholipid bilayers.</text>
</comment>
<comment type="PTM">
    <text evidence="13">Ubiquitinated. Deubiquitinated by CAND1 to prevent its degradation.</text>
</comment>
<proteinExistence type="evidence at protein level"/>
<reference key="1">
    <citation type="journal article" date="1994" name="Neuron">
        <title>Synaptic targeting of rabphilin-3A, a synaptic vesicle Ca2+/phospholipid-binding protein, depends on rab3A/3C.</title>
        <authorList>
            <person name="Li C."/>
            <person name="Takei K."/>
            <person name="Geppert M."/>
            <person name="Daniell L."/>
            <person name="Stenius K."/>
            <person name="Chapman E.R."/>
            <person name="Jahn R."/>
            <person name="de Camilli P."/>
            <person name="Suedhof T.C."/>
        </authorList>
    </citation>
    <scope>NUCLEOTIDE SEQUENCE [MRNA]</scope>
</reference>
<reference key="2">
    <citation type="journal article" date="1994" name="Biochem. Biophys. Res. Commun.">
        <title>Localization of Rabphilin-3A on the synaptic vesicle.</title>
        <authorList>
            <person name="Mizoguchi A."/>
            <person name="Yano Y."/>
            <person name="Hamaguchi H."/>
            <person name="Yanagida H."/>
            <person name="Ide C."/>
            <person name="Zahraoui A."/>
            <person name="Shirataki H."/>
            <person name="Sasaki T."/>
            <person name="Takai Y."/>
        </authorList>
    </citation>
    <scope>SUBCELLULAR LOCATION</scope>
</reference>
<reference key="3">
    <citation type="journal article" date="1996" name="EMBO J.">
        <title>Rab3 reversibly recruits rabphilin to synaptic vesicles by a mechanism analogous to raf recruitment by ras.</title>
        <authorList>
            <person name="Stahl B."/>
            <person name="Chou J.H."/>
            <person name="Li C."/>
            <person name="Suedhof T.C."/>
            <person name="Jahn R."/>
        </authorList>
    </citation>
    <scope>FUNCTION</scope>
    <scope>SUBCELLULAR LOCATION</scope>
    <scope>INTERACTION WITH RAB3A</scope>
</reference>
<reference key="4">
    <citation type="journal article" date="2005" name="J. Biol. Chem.">
        <title>The C2B domain of rabphilin directly interacts with SNAP-25 and regulates the docking step of dense core vesicle exocytosis in PC12 cells.</title>
        <authorList>
            <person name="Tsuboi T."/>
            <person name="Fukuda M."/>
        </authorList>
    </citation>
    <scope>FUNCTION</scope>
    <scope>INTERACTION WITH SNAP25 AND RAB27A</scope>
</reference>
<reference key="5">
    <citation type="journal article" date="2012" name="Nat. Commun.">
        <title>Quantitative maps of protein phosphorylation sites across 14 different rat organs and tissues.</title>
        <authorList>
            <person name="Lundby A."/>
            <person name="Secher A."/>
            <person name="Lage K."/>
            <person name="Nordsborg N.B."/>
            <person name="Dmytriyev A."/>
            <person name="Lundby C."/>
            <person name="Olsen J.V."/>
        </authorList>
    </citation>
    <scope>PHOSPHORYLATION [LARGE SCALE ANALYSIS] AT SER-682 AND SER-683</scope>
    <scope>IDENTIFICATION BY MASS SPECTROMETRY [LARGE SCALE ANALYSIS]</scope>
</reference>
<reference key="6">
    <citation type="journal article" date="2015" name="Nat. Commun.">
        <title>Rabphilin 3A retains NMDA receptors at synaptic sites through interaction with GluN2A/PSD-95 complex.</title>
        <authorList>
            <person name="Stanic J."/>
            <person name="Carta M."/>
            <person name="Eberini I."/>
            <person name="Pelucchi S."/>
            <person name="Marcello E."/>
            <person name="Genazzani A.A."/>
            <person name="Racca C."/>
            <person name="Mulle C."/>
            <person name="Di Luca M."/>
            <person name="Gardoni F."/>
        </authorList>
    </citation>
    <scope>FUNCTION</scope>
    <scope>INTERACTION WITH GRIN2A AND DLG4</scope>
    <scope>SUBCELLULAR LOCATION</scope>
</reference>
<reference key="7">
    <citation type="journal article" date="2018" name="Endocr. J.">
        <title>Cullin-associated NEDD8-dissociated protein 1, a novel interactor of rabphilin-3A, deubiquitylates rabphilin-3A and regulates arginine vasopressin secretion in PC12 cells.</title>
        <authorList>
            <person name="Nakashima K."/>
            <person name="Takeuchi S."/>
            <person name="Iwama S."/>
            <person name="Kiyota A."/>
            <person name="Yasuda Y."/>
            <person name="Iwata N."/>
            <person name="Enomoto A."/>
            <person name="Arima H."/>
            <person name="Sugimura Y."/>
        </authorList>
    </citation>
    <scope>INTERACTION WITH CAND1</scope>
    <scope>FUNCTION</scope>
</reference>
<reference key="8">
    <citation type="journal article" date="1999" name="Cell">
        <title>Structural basis of Rab effector specificity: crystal structure of the small G protein Rab3A complexed with the effector domain of rabphilin-3A.</title>
        <authorList>
            <person name="Ostermeier C."/>
            <person name="Brunger A.T."/>
        </authorList>
    </citation>
    <scope>X-RAY CRYSTALLOGRAPHY (2.60 ANGSTROMS) OF 41-170 IN COMPLEX WITH RAB3A</scope>
    <source>
        <tissue>Brain</tissue>
    </source>
</reference>
<reference key="9">
    <citation type="journal article" date="1999" name="Nat. Cell Biol.">
        <title>Structure of the Janus-faced C2B domain of rabphilin.</title>
        <authorList>
            <person name="Ubach J."/>
            <person name="Garcia J."/>
            <person name="Nittler M.P."/>
            <person name="Sudhof T.C."/>
            <person name="Rizo J."/>
        </authorList>
    </citation>
    <scope>STRUCTURE BY NMR OF 541-680</scope>
</reference>
<reference key="10">
    <citation type="journal article" date="2007" name="J. Biol. Chem.">
        <title>The C2A-C2B linker defines the high affinity Ca(2+) binding mode of rabphilin-3A.</title>
        <authorList>
            <person name="Montaville P."/>
            <person name="Schlicker C."/>
            <person name="Leonov A."/>
            <person name="Zweckstetter M."/>
            <person name="Sheldrick G.M."/>
            <person name="Becker S."/>
        </authorList>
    </citation>
    <scope>X-RAY CRYSTALLOGRAPHY (1.28 ANGSTROMS) OF 519-684 IN COMPLEX WITH CALCIUM IONS</scope>
    <scope>DOMAIN</scope>
    <scope>SUBCELLULAR LOCATION</scope>
    <scope>CALCIUM-BINDING</scope>
</reference>
<reference key="11">
    <citation type="journal article" date="2013" name="Proc. Natl. Acad. Sci. U.S.A.">
        <title>Structural insights into the Ca2+ and PI(4,5)P2 binding modes of the C2 domains of rabphilin 3A and synaptotagmin 1.</title>
        <authorList>
            <person name="Guillen J."/>
            <person name="Ferrer-Orta C."/>
            <person name="Buxaderas M."/>
            <person name="Perez-Sanchez D."/>
            <person name="Guerrero-Valero M."/>
            <person name="Luengo-Gil G."/>
            <person name="Pous J."/>
            <person name="Guerra P."/>
            <person name="Gomez-Fernandez J.C."/>
            <person name="Verdaguer N."/>
            <person name="Corbalan-Garcia S."/>
        </authorList>
    </citation>
    <scope>X-RAY CRYSTALLOGRAPHY (1.80 ANGSTROMS) OF 378-510 IN COMPLEX WITH CALCIUM</scope>
</reference>
<reference key="12">
    <citation type="journal article" date="2017" name="Proc. Natl. Acad. Sci. U.S.A.">
        <title>Structural characterization of the Rabphilin-3A-SNAP25 interaction.</title>
        <authorList>
            <person name="Ferrer-Orta C."/>
            <person name="Perez-Sanchez M.D."/>
            <person name="Coronado-Parra T."/>
            <person name="Silva C."/>
            <person name="Lopez-Martinez D."/>
            <person name="Baltanas-Copado J."/>
            <person name="Gomez-Fernandez J.C."/>
            <person name="Corbalan-Garcia S."/>
            <person name="Verdaguer N."/>
        </authorList>
    </citation>
    <scope>X-RAY CRYSTALLOGRAPHY (2.50 ANGSTROMS) OF 536-680</scope>
    <scope>INTERACTION WITH SNAP25</scope>
</reference>